<evidence type="ECO:0000255" key="1">
    <source>
        <dbReference type="HAMAP-Rule" id="MF_01151"/>
    </source>
</evidence>
<evidence type="ECO:0000256" key="2">
    <source>
        <dbReference type="SAM" id="MobiDB-lite"/>
    </source>
</evidence>
<reference key="1">
    <citation type="journal article" date="2005" name="Genome Res.">
        <title>Living with two extremes: conclusions from the genome sequence of Natronomonas pharaonis.</title>
        <authorList>
            <person name="Falb M."/>
            <person name="Pfeiffer F."/>
            <person name="Palm P."/>
            <person name="Rodewald K."/>
            <person name="Hickmann V."/>
            <person name="Tittor J."/>
            <person name="Oesterhelt D."/>
        </authorList>
    </citation>
    <scope>NUCLEOTIDE SEQUENCE [LARGE SCALE GENOMIC DNA]</scope>
    <source>
        <strain>ATCC 35678 / DSM 2160 / CIP 103997 / JCM 8858 / NBRC 14720 / NCIMB 2260 / Gabara</strain>
    </source>
</reference>
<sequence length="217" mass="23817">MSDDQGDAVEASSEADEEASTSPDEGDDRDPVAAVAERAENDPASVAAELVALREEAAELETERDDLESRLKRKQAEFQNYKKRQEKQREKERARATEALVEKLLEVRDNLNRALEQDADADIREGVEATFRQLDDILDGEGVEAIEPDPGTETDPKRHEVLLQVESDEPEGTVAELHRPGYEMAGKVLRAAQVTVSEGPSGDSEAEDDADGEDGDE</sequence>
<dbReference type="EMBL" id="CR936257">
    <property type="protein sequence ID" value="CAI48199.1"/>
    <property type="molecule type" value="Genomic_DNA"/>
</dbReference>
<dbReference type="RefSeq" id="WP_011321838.1">
    <property type="nucleotide sequence ID" value="NC_007426.1"/>
</dbReference>
<dbReference type="SMR" id="Q3IUI1"/>
<dbReference type="STRING" id="348780.NP_0216A"/>
<dbReference type="EnsemblBacteria" id="CAI48199">
    <property type="protein sequence ID" value="CAI48199"/>
    <property type="gene ID" value="NP_0216A"/>
</dbReference>
<dbReference type="GeneID" id="3702777"/>
<dbReference type="KEGG" id="nph:NP_0216A"/>
<dbReference type="eggNOG" id="arCOG04772">
    <property type="taxonomic scope" value="Archaea"/>
</dbReference>
<dbReference type="HOGENOM" id="CLU_057217_3_0_2"/>
<dbReference type="OrthoDB" id="372230at2157"/>
<dbReference type="Proteomes" id="UP000002698">
    <property type="component" value="Chromosome"/>
</dbReference>
<dbReference type="GO" id="GO:0005737">
    <property type="term" value="C:cytoplasm"/>
    <property type="evidence" value="ECO:0007669"/>
    <property type="project" value="UniProtKB-SubCell"/>
</dbReference>
<dbReference type="GO" id="GO:0000774">
    <property type="term" value="F:adenyl-nucleotide exchange factor activity"/>
    <property type="evidence" value="ECO:0007669"/>
    <property type="project" value="InterPro"/>
</dbReference>
<dbReference type="GO" id="GO:0042803">
    <property type="term" value="F:protein homodimerization activity"/>
    <property type="evidence" value="ECO:0007669"/>
    <property type="project" value="InterPro"/>
</dbReference>
<dbReference type="GO" id="GO:0051087">
    <property type="term" value="F:protein-folding chaperone binding"/>
    <property type="evidence" value="ECO:0007669"/>
    <property type="project" value="InterPro"/>
</dbReference>
<dbReference type="GO" id="GO:0051082">
    <property type="term" value="F:unfolded protein binding"/>
    <property type="evidence" value="ECO:0007669"/>
    <property type="project" value="TreeGrafter"/>
</dbReference>
<dbReference type="GO" id="GO:0006457">
    <property type="term" value="P:protein folding"/>
    <property type="evidence" value="ECO:0007669"/>
    <property type="project" value="InterPro"/>
</dbReference>
<dbReference type="CDD" id="cd00446">
    <property type="entry name" value="GrpE"/>
    <property type="match status" value="1"/>
</dbReference>
<dbReference type="Gene3D" id="3.90.20.20">
    <property type="match status" value="1"/>
</dbReference>
<dbReference type="Gene3D" id="2.30.22.10">
    <property type="entry name" value="Head domain of nucleotide exchange factor GrpE"/>
    <property type="match status" value="1"/>
</dbReference>
<dbReference type="HAMAP" id="MF_01151">
    <property type="entry name" value="GrpE"/>
    <property type="match status" value="1"/>
</dbReference>
<dbReference type="InterPro" id="IPR000740">
    <property type="entry name" value="GrpE"/>
</dbReference>
<dbReference type="InterPro" id="IPR013805">
    <property type="entry name" value="GrpE_coiled_coil"/>
</dbReference>
<dbReference type="InterPro" id="IPR009012">
    <property type="entry name" value="GrpE_head"/>
</dbReference>
<dbReference type="PANTHER" id="PTHR21237">
    <property type="entry name" value="GRPE PROTEIN"/>
    <property type="match status" value="1"/>
</dbReference>
<dbReference type="PANTHER" id="PTHR21237:SF23">
    <property type="entry name" value="GRPE PROTEIN HOMOLOG, MITOCHONDRIAL"/>
    <property type="match status" value="1"/>
</dbReference>
<dbReference type="Pfam" id="PF01025">
    <property type="entry name" value="GrpE"/>
    <property type="match status" value="1"/>
</dbReference>
<dbReference type="PRINTS" id="PR00773">
    <property type="entry name" value="GRPEPROTEIN"/>
</dbReference>
<dbReference type="SUPFAM" id="SSF58014">
    <property type="entry name" value="Coiled-coil domain of nucleotide exchange factor GrpE"/>
    <property type="match status" value="1"/>
</dbReference>
<dbReference type="SUPFAM" id="SSF51064">
    <property type="entry name" value="Head domain of nucleotide exchange factor GrpE"/>
    <property type="match status" value="1"/>
</dbReference>
<protein>
    <recommendedName>
        <fullName evidence="1">Protein GrpE</fullName>
    </recommendedName>
    <alternativeName>
        <fullName evidence="1">HSP-70 cofactor</fullName>
    </alternativeName>
</protein>
<feature type="chain" id="PRO_1000053607" description="Protein GrpE">
    <location>
        <begin position="1"/>
        <end position="217"/>
    </location>
</feature>
<feature type="region of interest" description="Disordered" evidence="2">
    <location>
        <begin position="1"/>
        <end position="44"/>
    </location>
</feature>
<feature type="region of interest" description="Disordered" evidence="2">
    <location>
        <begin position="135"/>
        <end position="157"/>
    </location>
</feature>
<feature type="region of interest" description="Disordered" evidence="2">
    <location>
        <begin position="193"/>
        <end position="217"/>
    </location>
</feature>
<feature type="compositionally biased region" description="Acidic residues" evidence="2">
    <location>
        <begin position="1"/>
        <end position="28"/>
    </location>
</feature>
<feature type="compositionally biased region" description="Acidic residues" evidence="2">
    <location>
        <begin position="136"/>
        <end position="152"/>
    </location>
</feature>
<feature type="compositionally biased region" description="Acidic residues" evidence="2">
    <location>
        <begin position="204"/>
        <end position="217"/>
    </location>
</feature>
<organism>
    <name type="scientific">Natronomonas pharaonis (strain ATCC 35678 / DSM 2160 / CIP 103997 / JCM 8858 / NBRC 14720 / NCIMB 2260 / Gabara)</name>
    <name type="common">Halobacterium pharaonis</name>
    <dbReference type="NCBI Taxonomy" id="348780"/>
    <lineage>
        <taxon>Archaea</taxon>
        <taxon>Methanobacteriati</taxon>
        <taxon>Methanobacteriota</taxon>
        <taxon>Stenosarchaea group</taxon>
        <taxon>Halobacteria</taxon>
        <taxon>Halobacteriales</taxon>
        <taxon>Haloarculaceae</taxon>
        <taxon>Natronomonas</taxon>
    </lineage>
</organism>
<proteinExistence type="inferred from homology"/>
<keyword id="KW-0143">Chaperone</keyword>
<keyword id="KW-0963">Cytoplasm</keyword>
<keyword id="KW-1185">Reference proteome</keyword>
<keyword id="KW-0346">Stress response</keyword>
<gene>
    <name evidence="1" type="primary">grpE</name>
    <name type="ordered locus">NP_0216A</name>
</gene>
<comment type="function">
    <text evidence="1">Participates actively in the response to hyperosmotic and heat shock by preventing the aggregation of stress-denatured proteins, in association with DnaK and GrpE. It is the nucleotide exchange factor for DnaK and may function as a thermosensor. Unfolded proteins bind initially to DnaJ; upon interaction with the DnaJ-bound protein, DnaK hydrolyzes its bound ATP, resulting in the formation of a stable complex. GrpE releases ADP from DnaK; ATP binding to DnaK triggers the release of the substrate protein, thus completing the reaction cycle. Several rounds of ATP-dependent interactions between DnaJ, DnaK and GrpE are required for fully efficient folding.</text>
</comment>
<comment type="subunit">
    <text evidence="1">Homodimer.</text>
</comment>
<comment type="subcellular location">
    <subcellularLocation>
        <location evidence="1">Cytoplasm</location>
    </subcellularLocation>
</comment>
<comment type="similarity">
    <text evidence="1">Belongs to the GrpE family.</text>
</comment>
<accession>Q3IUI1</accession>
<name>GRPE_NATPD</name>